<reference key="1">
    <citation type="submission" date="2008-02" db="EMBL/GenBank/DDBJ databases">
        <title>Complete sequence of Escherichia coli C str. ATCC 8739.</title>
        <authorList>
            <person name="Copeland A."/>
            <person name="Lucas S."/>
            <person name="Lapidus A."/>
            <person name="Glavina del Rio T."/>
            <person name="Dalin E."/>
            <person name="Tice H."/>
            <person name="Bruce D."/>
            <person name="Goodwin L."/>
            <person name="Pitluck S."/>
            <person name="Kiss H."/>
            <person name="Brettin T."/>
            <person name="Detter J.C."/>
            <person name="Han C."/>
            <person name="Kuske C.R."/>
            <person name="Schmutz J."/>
            <person name="Larimer F."/>
            <person name="Land M."/>
            <person name="Hauser L."/>
            <person name="Kyrpides N."/>
            <person name="Mikhailova N."/>
            <person name="Ingram L."/>
            <person name="Richardson P."/>
        </authorList>
    </citation>
    <scope>NUCLEOTIDE SEQUENCE [LARGE SCALE GENOMIC DNA]</scope>
    <source>
        <strain>ATCC 8739 / DSM 1576 / NBRC 3972 / NCIMB 8545 / WDCM 00012 / Crooks</strain>
    </source>
</reference>
<proteinExistence type="inferred from homology"/>
<feature type="chain" id="PRO_1000088588" description="Tyrosine--tRNA ligase">
    <location>
        <begin position="1"/>
        <end position="424"/>
    </location>
</feature>
<feature type="domain" description="S4 RNA-binding" evidence="1">
    <location>
        <begin position="357"/>
        <end position="414"/>
    </location>
</feature>
<feature type="short sequence motif" description="'HIGH' region">
    <location>
        <begin position="42"/>
        <end position="51"/>
    </location>
</feature>
<feature type="short sequence motif" description="'KMSKS' region">
    <location>
        <begin position="235"/>
        <end position="239"/>
    </location>
</feature>
<feature type="binding site" evidence="1">
    <location>
        <position position="37"/>
    </location>
    <ligand>
        <name>L-tyrosine</name>
        <dbReference type="ChEBI" id="CHEBI:58315"/>
    </ligand>
</feature>
<feature type="binding site" evidence="1">
    <location>
        <position position="175"/>
    </location>
    <ligand>
        <name>L-tyrosine</name>
        <dbReference type="ChEBI" id="CHEBI:58315"/>
    </ligand>
</feature>
<feature type="binding site" evidence="1">
    <location>
        <position position="179"/>
    </location>
    <ligand>
        <name>L-tyrosine</name>
        <dbReference type="ChEBI" id="CHEBI:58315"/>
    </ligand>
</feature>
<feature type="binding site" evidence="1">
    <location>
        <position position="238"/>
    </location>
    <ligand>
        <name>ATP</name>
        <dbReference type="ChEBI" id="CHEBI:30616"/>
    </ligand>
</feature>
<feature type="modified residue" description="N6-acetyllysine" evidence="1">
    <location>
        <position position="144"/>
    </location>
</feature>
<evidence type="ECO:0000255" key="1">
    <source>
        <dbReference type="HAMAP-Rule" id="MF_02006"/>
    </source>
</evidence>
<accession>B1IQB7</accession>
<keyword id="KW-0007">Acetylation</keyword>
<keyword id="KW-0030">Aminoacyl-tRNA synthetase</keyword>
<keyword id="KW-0067">ATP-binding</keyword>
<keyword id="KW-0963">Cytoplasm</keyword>
<keyword id="KW-0436">Ligase</keyword>
<keyword id="KW-0547">Nucleotide-binding</keyword>
<keyword id="KW-0648">Protein biosynthesis</keyword>
<keyword id="KW-0694">RNA-binding</keyword>
<comment type="function">
    <text evidence="1">Catalyzes the attachment of tyrosine to tRNA(Tyr) in a two-step reaction: tyrosine is first activated by ATP to form Tyr-AMP and then transferred to the acceptor end of tRNA(Tyr).</text>
</comment>
<comment type="catalytic activity">
    <reaction evidence="1">
        <text>tRNA(Tyr) + L-tyrosine + ATP = L-tyrosyl-tRNA(Tyr) + AMP + diphosphate + H(+)</text>
        <dbReference type="Rhea" id="RHEA:10220"/>
        <dbReference type="Rhea" id="RHEA-COMP:9706"/>
        <dbReference type="Rhea" id="RHEA-COMP:9707"/>
        <dbReference type="ChEBI" id="CHEBI:15378"/>
        <dbReference type="ChEBI" id="CHEBI:30616"/>
        <dbReference type="ChEBI" id="CHEBI:33019"/>
        <dbReference type="ChEBI" id="CHEBI:58315"/>
        <dbReference type="ChEBI" id="CHEBI:78442"/>
        <dbReference type="ChEBI" id="CHEBI:78536"/>
        <dbReference type="ChEBI" id="CHEBI:456215"/>
        <dbReference type="EC" id="6.1.1.1"/>
    </reaction>
</comment>
<comment type="subunit">
    <text evidence="1">Homodimer.</text>
</comment>
<comment type="subcellular location">
    <subcellularLocation>
        <location evidence="1">Cytoplasm</location>
    </subcellularLocation>
</comment>
<comment type="similarity">
    <text evidence="1">Belongs to the class-I aminoacyl-tRNA synthetase family. TyrS type 1 subfamily.</text>
</comment>
<dbReference type="EC" id="6.1.1.1" evidence="1"/>
<dbReference type="EMBL" id="CP000946">
    <property type="protein sequence ID" value="ACA77638.1"/>
    <property type="molecule type" value="Genomic_DNA"/>
</dbReference>
<dbReference type="RefSeq" id="WP_001295400.1">
    <property type="nucleotide sequence ID" value="NZ_MTFT01000006.1"/>
</dbReference>
<dbReference type="SMR" id="B1IQB7"/>
<dbReference type="GeneID" id="93775791"/>
<dbReference type="KEGG" id="ecl:EcolC_1992"/>
<dbReference type="HOGENOM" id="CLU_024003_0_3_6"/>
<dbReference type="GO" id="GO:0005829">
    <property type="term" value="C:cytosol"/>
    <property type="evidence" value="ECO:0007669"/>
    <property type="project" value="TreeGrafter"/>
</dbReference>
<dbReference type="GO" id="GO:0005524">
    <property type="term" value="F:ATP binding"/>
    <property type="evidence" value="ECO:0007669"/>
    <property type="project" value="UniProtKB-UniRule"/>
</dbReference>
<dbReference type="GO" id="GO:0003723">
    <property type="term" value="F:RNA binding"/>
    <property type="evidence" value="ECO:0007669"/>
    <property type="project" value="UniProtKB-KW"/>
</dbReference>
<dbReference type="GO" id="GO:0004831">
    <property type="term" value="F:tyrosine-tRNA ligase activity"/>
    <property type="evidence" value="ECO:0007669"/>
    <property type="project" value="UniProtKB-UniRule"/>
</dbReference>
<dbReference type="GO" id="GO:0006437">
    <property type="term" value="P:tyrosyl-tRNA aminoacylation"/>
    <property type="evidence" value="ECO:0007669"/>
    <property type="project" value="UniProtKB-UniRule"/>
</dbReference>
<dbReference type="CDD" id="cd00165">
    <property type="entry name" value="S4"/>
    <property type="match status" value="1"/>
</dbReference>
<dbReference type="CDD" id="cd00805">
    <property type="entry name" value="TyrRS_core"/>
    <property type="match status" value="1"/>
</dbReference>
<dbReference type="FunFam" id="1.10.240.10:FF:000001">
    <property type="entry name" value="Tyrosine--tRNA ligase"/>
    <property type="match status" value="1"/>
</dbReference>
<dbReference type="FunFam" id="3.10.290.10:FF:000007">
    <property type="entry name" value="Tyrosine--tRNA ligase"/>
    <property type="match status" value="1"/>
</dbReference>
<dbReference type="FunFam" id="3.40.50.620:FF:000008">
    <property type="entry name" value="Tyrosine--tRNA ligase"/>
    <property type="match status" value="1"/>
</dbReference>
<dbReference type="Gene3D" id="3.40.50.620">
    <property type="entry name" value="HUPs"/>
    <property type="match status" value="1"/>
</dbReference>
<dbReference type="Gene3D" id="3.10.290.10">
    <property type="entry name" value="RNA-binding S4 domain"/>
    <property type="match status" value="1"/>
</dbReference>
<dbReference type="Gene3D" id="1.10.240.10">
    <property type="entry name" value="Tyrosyl-Transfer RNA Synthetase"/>
    <property type="match status" value="1"/>
</dbReference>
<dbReference type="HAMAP" id="MF_02006">
    <property type="entry name" value="Tyr_tRNA_synth_type1"/>
    <property type="match status" value="1"/>
</dbReference>
<dbReference type="InterPro" id="IPR001412">
    <property type="entry name" value="aa-tRNA-synth_I_CS"/>
</dbReference>
<dbReference type="InterPro" id="IPR002305">
    <property type="entry name" value="aa-tRNA-synth_Ic"/>
</dbReference>
<dbReference type="InterPro" id="IPR014729">
    <property type="entry name" value="Rossmann-like_a/b/a_fold"/>
</dbReference>
<dbReference type="InterPro" id="IPR002942">
    <property type="entry name" value="S4_RNA-bd"/>
</dbReference>
<dbReference type="InterPro" id="IPR036986">
    <property type="entry name" value="S4_RNA-bd_sf"/>
</dbReference>
<dbReference type="InterPro" id="IPR054608">
    <property type="entry name" value="SYY-like_C"/>
</dbReference>
<dbReference type="InterPro" id="IPR002307">
    <property type="entry name" value="Tyr-tRNA-ligase"/>
</dbReference>
<dbReference type="InterPro" id="IPR024088">
    <property type="entry name" value="Tyr-tRNA-ligase_bac-type"/>
</dbReference>
<dbReference type="InterPro" id="IPR024107">
    <property type="entry name" value="Tyr-tRNA-ligase_bac_1"/>
</dbReference>
<dbReference type="NCBIfam" id="TIGR00234">
    <property type="entry name" value="tyrS"/>
    <property type="match status" value="1"/>
</dbReference>
<dbReference type="PANTHER" id="PTHR11766:SF0">
    <property type="entry name" value="TYROSINE--TRNA LIGASE, MITOCHONDRIAL"/>
    <property type="match status" value="1"/>
</dbReference>
<dbReference type="PANTHER" id="PTHR11766">
    <property type="entry name" value="TYROSYL-TRNA SYNTHETASE"/>
    <property type="match status" value="1"/>
</dbReference>
<dbReference type="Pfam" id="PF22421">
    <property type="entry name" value="SYY_C-terminal"/>
    <property type="match status" value="1"/>
</dbReference>
<dbReference type="Pfam" id="PF00579">
    <property type="entry name" value="tRNA-synt_1b"/>
    <property type="match status" value="1"/>
</dbReference>
<dbReference type="PRINTS" id="PR01040">
    <property type="entry name" value="TRNASYNTHTYR"/>
</dbReference>
<dbReference type="SMART" id="SM00363">
    <property type="entry name" value="S4"/>
    <property type="match status" value="1"/>
</dbReference>
<dbReference type="SUPFAM" id="SSF55174">
    <property type="entry name" value="Alpha-L RNA-binding motif"/>
    <property type="match status" value="1"/>
</dbReference>
<dbReference type="SUPFAM" id="SSF52374">
    <property type="entry name" value="Nucleotidylyl transferase"/>
    <property type="match status" value="1"/>
</dbReference>
<dbReference type="PROSITE" id="PS00178">
    <property type="entry name" value="AA_TRNA_LIGASE_I"/>
    <property type="match status" value="1"/>
</dbReference>
<dbReference type="PROSITE" id="PS50889">
    <property type="entry name" value="S4"/>
    <property type="match status" value="1"/>
</dbReference>
<organism>
    <name type="scientific">Escherichia coli (strain ATCC 8739 / DSM 1576 / NBRC 3972 / NCIMB 8545 / WDCM 00012 / Crooks)</name>
    <dbReference type="NCBI Taxonomy" id="481805"/>
    <lineage>
        <taxon>Bacteria</taxon>
        <taxon>Pseudomonadati</taxon>
        <taxon>Pseudomonadota</taxon>
        <taxon>Gammaproteobacteria</taxon>
        <taxon>Enterobacterales</taxon>
        <taxon>Enterobacteriaceae</taxon>
        <taxon>Escherichia</taxon>
    </lineage>
</organism>
<sequence>MASSNLIKQLQERGLVAQVTDEEALAERLAQGPIALYCGFDPTADSLHLGHLVPLLCLKRFQQAGHKPVALVGGATGLIGDPSFKAAERKLNTEETVQEWVDKIRKQVAPFLDFDCGENSAIAANNYDWFGNMNVLTFLRDIGKHFSVNQMINKEAVKQRLNREDQGISFTEFSYNLLQGYDFACLNKQYGVVLQIGGSDQWGNITSGIDLTRRLHQNQVFGLTVPLITKADGTKFGKTEGGAVWLDPKKTSPYKFYQFWINTADADVYRFLKFFTFMSIEEINALEEEDKNSGKAPRAQYVLAEQVTRLVHGEEGLQAAKRITECLFSGSLSALSEADFEQLAQDGVPMVEMEKGADLMQALVDSELQPSRGQARKTIASNAITINGEKQSDPEYFFKEEDRLFGRFTLLRRGKKNYCLICWK</sequence>
<protein>
    <recommendedName>
        <fullName evidence="1">Tyrosine--tRNA ligase</fullName>
        <ecNumber evidence="1">6.1.1.1</ecNumber>
    </recommendedName>
    <alternativeName>
        <fullName evidence="1">Tyrosyl-tRNA synthetase</fullName>
        <shortName evidence="1">TyrRS</shortName>
    </alternativeName>
</protein>
<name>SYY_ECOLC</name>
<gene>
    <name evidence="1" type="primary">tyrS</name>
    <name type="ordered locus">EcolC_1992</name>
</gene>